<gene>
    <name evidence="1" type="primary">dadA</name>
    <name type="ordered locus">VS_1133</name>
</gene>
<feature type="chain" id="PRO_1000164645" description="D-amino acid dehydrogenase">
    <location>
        <begin position="1"/>
        <end position="417"/>
    </location>
</feature>
<feature type="binding site" evidence="1">
    <location>
        <begin position="3"/>
        <end position="17"/>
    </location>
    <ligand>
        <name>FAD</name>
        <dbReference type="ChEBI" id="CHEBI:57692"/>
    </ligand>
</feature>
<comment type="function">
    <text evidence="1">Oxidative deamination of D-amino acids.</text>
</comment>
<comment type="catalytic activity">
    <reaction evidence="1">
        <text>a D-alpha-amino acid + A + H2O = a 2-oxocarboxylate + AH2 + NH4(+)</text>
        <dbReference type="Rhea" id="RHEA:18125"/>
        <dbReference type="ChEBI" id="CHEBI:13193"/>
        <dbReference type="ChEBI" id="CHEBI:15377"/>
        <dbReference type="ChEBI" id="CHEBI:17499"/>
        <dbReference type="ChEBI" id="CHEBI:28938"/>
        <dbReference type="ChEBI" id="CHEBI:35179"/>
        <dbReference type="ChEBI" id="CHEBI:59871"/>
    </reaction>
</comment>
<comment type="cofactor">
    <cofactor evidence="1">
        <name>FAD</name>
        <dbReference type="ChEBI" id="CHEBI:57692"/>
    </cofactor>
</comment>
<comment type="pathway">
    <text>Amino-acid degradation; D-alanine degradation; NH(3) and pyruvate from D-alanine: step 1/1.</text>
</comment>
<comment type="similarity">
    <text evidence="1">Belongs to the DadA oxidoreductase family.</text>
</comment>
<accession>B7VMK8</accession>
<organism>
    <name type="scientific">Vibrio atlanticus (strain LGP32)</name>
    <name type="common">Vibrio splendidus (strain Mel32)</name>
    <dbReference type="NCBI Taxonomy" id="575788"/>
    <lineage>
        <taxon>Bacteria</taxon>
        <taxon>Pseudomonadati</taxon>
        <taxon>Pseudomonadota</taxon>
        <taxon>Gammaproteobacteria</taxon>
        <taxon>Vibrionales</taxon>
        <taxon>Vibrionaceae</taxon>
        <taxon>Vibrio</taxon>
    </lineage>
</organism>
<reference key="1">
    <citation type="submission" date="2009-02" db="EMBL/GenBank/DDBJ databases">
        <title>Vibrio splendidus str. LGP32 complete genome.</title>
        <authorList>
            <person name="Mazel D."/>
            <person name="Le Roux F."/>
        </authorList>
    </citation>
    <scope>NUCLEOTIDE SEQUENCE [LARGE SCALE GENOMIC DNA]</scope>
    <source>
        <strain>LGP32</strain>
    </source>
</reference>
<proteinExistence type="inferred from homology"/>
<dbReference type="EC" id="1.4.99.-" evidence="1"/>
<dbReference type="EMBL" id="FM954972">
    <property type="protein sequence ID" value="CAV18259.1"/>
    <property type="molecule type" value="Genomic_DNA"/>
</dbReference>
<dbReference type="SMR" id="B7VMK8"/>
<dbReference type="STRING" id="575788.VS_1133"/>
<dbReference type="KEGG" id="vsp:VS_1133"/>
<dbReference type="PATRIC" id="fig|575788.5.peg.2456"/>
<dbReference type="eggNOG" id="COG0665">
    <property type="taxonomic scope" value="Bacteria"/>
</dbReference>
<dbReference type="HOGENOM" id="CLU_007884_9_2_6"/>
<dbReference type="UniPathway" id="UPA00043">
    <property type="reaction ID" value="UER00498"/>
</dbReference>
<dbReference type="Proteomes" id="UP000009100">
    <property type="component" value="Chromosome 1"/>
</dbReference>
<dbReference type="GO" id="GO:0005737">
    <property type="term" value="C:cytoplasm"/>
    <property type="evidence" value="ECO:0007669"/>
    <property type="project" value="TreeGrafter"/>
</dbReference>
<dbReference type="GO" id="GO:0005886">
    <property type="term" value="C:plasma membrane"/>
    <property type="evidence" value="ECO:0007669"/>
    <property type="project" value="TreeGrafter"/>
</dbReference>
<dbReference type="GO" id="GO:0008718">
    <property type="term" value="F:D-amino-acid dehydrogenase activity"/>
    <property type="evidence" value="ECO:0007669"/>
    <property type="project" value="UniProtKB-UniRule"/>
</dbReference>
<dbReference type="GO" id="GO:0055130">
    <property type="term" value="P:D-alanine catabolic process"/>
    <property type="evidence" value="ECO:0007669"/>
    <property type="project" value="UniProtKB-UniPathway"/>
</dbReference>
<dbReference type="FunFam" id="3.50.50.60:FF:000020">
    <property type="entry name" value="D-amino acid dehydrogenase"/>
    <property type="match status" value="1"/>
</dbReference>
<dbReference type="Gene3D" id="3.30.9.10">
    <property type="entry name" value="D-Amino Acid Oxidase, subunit A, domain 2"/>
    <property type="match status" value="1"/>
</dbReference>
<dbReference type="Gene3D" id="3.50.50.60">
    <property type="entry name" value="FAD/NAD(P)-binding domain"/>
    <property type="match status" value="2"/>
</dbReference>
<dbReference type="HAMAP" id="MF_01202">
    <property type="entry name" value="DadA"/>
    <property type="match status" value="1"/>
</dbReference>
<dbReference type="InterPro" id="IPR023080">
    <property type="entry name" value="DadA"/>
</dbReference>
<dbReference type="InterPro" id="IPR006076">
    <property type="entry name" value="FAD-dep_OxRdtase"/>
</dbReference>
<dbReference type="InterPro" id="IPR036188">
    <property type="entry name" value="FAD/NAD-bd_sf"/>
</dbReference>
<dbReference type="NCBIfam" id="NF001933">
    <property type="entry name" value="PRK00711.1"/>
    <property type="match status" value="1"/>
</dbReference>
<dbReference type="PANTHER" id="PTHR13847:SF280">
    <property type="entry name" value="D-AMINO ACID DEHYDROGENASE"/>
    <property type="match status" value="1"/>
</dbReference>
<dbReference type="PANTHER" id="PTHR13847">
    <property type="entry name" value="SARCOSINE DEHYDROGENASE-RELATED"/>
    <property type="match status" value="1"/>
</dbReference>
<dbReference type="Pfam" id="PF01266">
    <property type="entry name" value="DAO"/>
    <property type="match status" value="1"/>
</dbReference>
<dbReference type="SUPFAM" id="SSF54373">
    <property type="entry name" value="FAD-linked reductases, C-terminal domain"/>
    <property type="match status" value="1"/>
</dbReference>
<dbReference type="SUPFAM" id="SSF51905">
    <property type="entry name" value="FAD/NAD(P)-binding domain"/>
    <property type="match status" value="1"/>
</dbReference>
<evidence type="ECO:0000255" key="1">
    <source>
        <dbReference type="HAMAP-Rule" id="MF_01202"/>
    </source>
</evidence>
<name>DADA_VIBA3</name>
<sequence>MEVIVIGSGVIGLTSAWYLAKEGHTVTVIDRQDSSGKETSFANAGQISYGYSSPWAAPGIPLKAMKWLTQEHAPLKVKPSLSPELVAWATKMLANCNEAKYAMNKSRMLRVANFSRECLTHLRTSEDLAYEGRQKGTLQVFRSEKQLDAIQQDMKLLTESGIEHSLFDVDQCLSVESGLADVKDKLVGGLYLPHDETGDCHQFCLTLTEKAKQLGVRFVFDTEVVSLNHQNRAIETITTTQGEFKADAYVVASGSYSRELLKQVDLSIPVYPVKGYSLTLPIVNVDKSPTSTVMDETYKVAMTRFDDRIRIAGTAELAGFDYLIPEKRKATIDMVIKDLFPQAGDFSKAEYWTGLRPMTPDGTPIIGKTPIKNLFTNTGHGTLGWTMACGSGKILASVVSGSASDIKSDDLSIHRYL</sequence>
<protein>
    <recommendedName>
        <fullName evidence="1">D-amino acid dehydrogenase</fullName>
        <ecNumber evidence="1">1.4.99.-</ecNumber>
    </recommendedName>
</protein>
<keyword id="KW-0274">FAD</keyword>
<keyword id="KW-0285">Flavoprotein</keyword>
<keyword id="KW-0560">Oxidoreductase</keyword>